<dbReference type="EMBL" id="BA000036">
    <property type="protein sequence ID" value="BAB98934.1"/>
    <property type="molecule type" value="Genomic_DNA"/>
</dbReference>
<dbReference type="EMBL" id="BX927152">
    <property type="protein sequence ID" value="CAF21549.1"/>
    <property type="molecule type" value="Genomic_DNA"/>
</dbReference>
<dbReference type="RefSeq" id="NP_600756.1">
    <property type="nucleotide sequence ID" value="NC_003450.3"/>
</dbReference>
<dbReference type="RefSeq" id="WP_003856101.1">
    <property type="nucleotide sequence ID" value="NC_006958.1"/>
</dbReference>
<dbReference type="PDB" id="4AC6">
    <property type="method" value="X-ray"/>
    <property type="resolution" value="2.54 A"/>
    <property type="chains" value="A=2-188"/>
</dbReference>
<dbReference type="PDB" id="4ACI">
    <property type="method" value="X-ray"/>
    <property type="resolution" value="1.65 A"/>
    <property type="chains" value="A/B=2-188"/>
</dbReference>
<dbReference type="PDB" id="4AF5">
    <property type="method" value="X-ray"/>
    <property type="resolution" value="1.90 A"/>
    <property type="chains" value="A=1-188"/>
</dbReference>
<dbReference type="PDBsum" id="4AC6"/>
<dbReference type="PDBsum" id="4ACI"/>
<dbReference type="PDBsum" id="4AF5"/>
<dbReference type="SMR" id="Q8NQ97"/>
<dbReference type="STRING" id="196627.cg1738"/>
<dbReference type="GeneID" id="1019513"/>
<dbReference type="KEGG" id="cgb:cg1738"/>
<dbReference type="KEGG" id="cgl:Cgl1541"/>
<dbReference type="PATRIC" id="fig|196627.13.peg.1508"/>
<dbReference type="eggNOG" id="COG1309">
    <property type="taxonomic scope" value="Bacteria"/>
</dbReference>
<dbReference type="HOGENOM" id="CLU_069356_15_12_11"/>
<dbReference type="OrthoDB" id="5816932at2"/>
<dbReference type="BioCyc" id="CORYNE:G18NG-11126-MONOMER"/>
<dbReference type="EvolutionaryTrace" id="Q8NQ97"/>
<dbReference type="Proteomes" id="UP000000582">
    <property type="component" value="Chromosome"/>
</dbReference>
<dbReference type="Proteomes" id="UP000001009">
    <property type="component" value="Chromosome"/>
</dbReference>
<dbReference type="GO" id="GO:0003677">
    <property type="term" value="F:DNA binding"/>
    <property type="evidence" value="ECO:0000314"/>
    <property type="project" value="UniProtKB"/>
</dbReference>
<dbReference type="GO" id="GO:0003700">
    <property type="term" value="F:DNA-binding transcription factor activity"/>
    <property type="evidence" value="ECO:0007669"/>
    <property type="project" value="TreeGrafter"/>
</dbReference>
<dbReference type="GO" id="GO:0000287">
    <property type="term" value="F:magnesium ion binding"/>
    <property type="evidence" value="ECO:0000314"/>
    <property type="project" value="UniProtKB"/>
</dbReference>
<dbReference type="GO" id="GO:0000976">
    <property type="term" value="F:transcription cis-regulatory region binding"/>
    <property type="evidence" value="ECO:0007669"/>
    <property type="project" value="TreeGrafter"/>
</dbReference>
<dbReference type="GO" id="GO:0006355">
    <property type="term" value="P:regulation of DNA-templated transcription"/>
    <property type="evidence" value="ECO:0000315"/>
    <property type="project" value="UniProtKB"/>
</dbReference>
<dbReference type="FunFam" id="1.10.357.10:FF:000013">
    <property type="entry name" value="TetR family transcriptional regulator"/>
    <property type="match status" value="1"/>
</dbReference>
<dbReference type="Gene3D" id="1.10.357.10">
    <property type="entry name" value="Tetracycline Repressor, domain 2"/>
    <property type="match status" value="1"/>
</dbReference>
<dbReference type="InterPro" id="IPR009057">
    <property type="entry name" value="Homeodomain-like_sf"/>
</dbReference>
<dbReference type="InterPro" id="IPR050109">
    <property type="entry name" value="HTH-type_TetR-like_transc_reg"/>
</dbReference>
<dbReference type="InterPro" id="IPR001647">
    <property type="entry name" value="HTH_TetR"/>
</dbReference>
<dbReference type="InterPro" id="IPR036271">
    <property type="entry name" value="Tet_transcr_reg_TetR-rel_C_sf"/>
</dbReference>
<dbReference type="PANTHER" id="PTHR30055">
    <property type="entry name" value="HTH-TYPE TRANSCRIPTIONAL REGULATOR RUTR"/>
    <property type="match status" value="1"/>
</dbReference>
<dbReference type="PANTHER" id="PTHR30055:SF229">
    <property type="entry name" value="HTH-TYPE TRANSCRIPTIONAL REPRESSOR RV1474C"/>
    <property type="match status" value="1"/>
</dbReference>
<dbReference type="Pfam" id="PF00440">
    <property type="entry name" value="TetR_N"/>
    <property type="match status" value="1"/>
</dbReference>
<dbReference type="PRINTS" id="PR00455">
    <property type="entry name" value="HTHTETR"/>
</dbReference>
<dbReference type="SUPFAM" id="SSF46689">
    <property type="entry name" value="Homeodomain-like"/>
    <property type="match status" value="1"/>
</dbReference>
<dbReference type="SUPFAM" id="SSF48498">
    <property type="entry name" value="Tetracyclin repressor-like, C-terminal domain"/>
    <property type="match status" value="1"/>
</dbReference>
<dbReference type="PROSITE" id="PS50977">
    <property type="entry name" value="HTH_TETR_2"/>
    <property type="match status" value="1"/>
</dbReference>
<name>ACNR_CORGL</name>
<gene>
    <name evidence="4" type="primary">acnR</name>
    <name type="ordered locus">Cgl1541</name>
    <name type="ordered locus">cg1738</name>
</gene>
<sequence length="188" mass="21185">MSVAAGDKPTNSRQEILEGARRCFAEHGYEGATVRRLEEATGKSRGAIFHHFGDKENLFLALAREDAARMAEVVSENGLVEVMRGMLEDPERYDWMSVRLEISKQLRTDPVFRAKWIDHQSVLDEAVRVRLSRNVDKGQMRTDVPIEVLHTFLETVLDGFISRLATGASTEGLSEVLDLVEGTVRKRD</sequence>
<accession>Q8NQ97</accession>
<accession>Q6M549</accession>
<organism>
    <name type="scientific">Corynebacterium glutamicum (strain ATCC 13032 / DSM 20300 / JCM 1318 / BCRC 11384 / CCUG 27702 / LMG 3730 / NBRC 12168 / NCIMB 10025 / NRRL B-2784 / 534)</name>
    <dbReference type="NCBI Taxonomy" id="196627"/>
    <lineage>
        <taxon>Bacteria</taxon>
        <taxon>Bacillati</taxon>
        <taxon>Actinomycetota</taxon>
        <taxon>Actinomycetes</taxon>
        <taxon>Mycobacteriales</taxon>
        <taxon>Corynebacteriaceae</taxon>
        <taxon>Corynebacterium</taxon>
    </lineage>
</organism>
<protein>
    <recommendedName>
        <fullName evidence="4">HTH-type transcriptional repressor AcnR</fullName>
    </recommendedName>
    <alternativeName>
        <fullName evidence="4">TetR-type regulator AcnR</fullName>
    </alternativeName>
</protein>
<comment type="function">
    <text evidence="2 3">AcnR negatively controls the expression of the aconitase gene acn. Binds to the imperfect inverted repeat in the acn promoter region.</text>
</comment>
<comment type="subunit">
    <text evidence="2 3">Homodimer.</text>
</comment>
<comment type="disruption phenotype">
    <text evidence="2">Deletion of acnR leads to a 5-fold increase of the aconitase activity. Overexpression of acnR leads to a 2-fold decrease of the aconitase activity.</text>
</comment>
<reference key="1">
    <citation type="journal article" date="2003" name="Appl. Microbiol. Biotechnol.">
        <title>The Corynebacterium glutamicum genome: features and impacts on biotechnological processes.</title>
        <authorList>
            <person name="Ikeda M."/>
            <person name="Nakagawa S."/>
        </authorList>
    </citation>
    <scope>NUCLEOTIDE SEQUENCE [LARGE SCALE GENOMIC DNA]</scope>
    <source>
        <strain>ATCC 13032 / DSM 20300 / JCM 1318 / BCRC 11384 / CCUG 27702 / LMG 3730 / NBRC 12168 / NCIMB 10025 / NRRL B-2784 / 534</strain>
    </source>
</reference>
<reference key="2">
    <citation type="journal article" date="2003" name="J. Biotechnol.">
        <title>The complete Corynebacterium glutamicum ATCC 13032 genome sequence and its impact on the production of L-aspartate-derived amino acids and vitamins.</title>
        <authorList>
            <person name="Kalinowski J."/>
            <person name="Bathe B."/>
            <person name="Bartels D."/>
            <person name="Bischoff N."/>
            <person name="Bott M."/>
            <person name="Burkovski A."/>
            <person name="Dusch N."/>
            <person name="Eggeling L."/>
            <person name="Eikmanns B.J."/>
            <person name="Gaigalat L."/>
            <person name="Goesmann A."/>
            <person name="Hartmann M."/>
            <person name="Huthmacher K."/>
            <person name="Kraemer R."/>
            <person name="Linke B."/>
            <person name="McHardy A.C."/>
            <person name="Meyer F."/>
            <person name="Moeckel B."/>
            <person name="Pfefferle W."/>
            <person name="Puehler A."/>
            <person name="Rey D.A."/>
            <person name="Rueckert C."/>
            <person name="Rupp O."/>
            <person name="Sahm H."/>
            <person name="Wendisch V.F."/>
            <person name="Wiegraebe I."/>
            <person name="Tauch A."/>
        </authorList>
    </citation>
    <scope>NUCLEOTIDE SEQUENCE [LARGE SCALE GENOMIC DNA]</scope>
    <source>
        <strain>ATCC 13032 / DSM 20300 / JCM 1318 / BCRC 11384 / CCUG 27702 / LMG 3730 / NBRC 12168 / NCIMB 10025 / NRRL B-2784 / 534</strain>
    </source>
</reference>
<reference key="3">
    <citation type="journal article" date="2005" name="J. Biol. Chem.">
        <title>Identification of AcnR, a TetR-type repressor of the aconitase gene acn in Corynebacterium glutamicum.</title>
        <authorList>
            <person name="Krug A."/>
            <person name="Wendisch V.F."/>
            <person name="Bott M."/>
        </authorList>
    </citation>
    <scope>FUNCTION</scope>
    <scope>DISRUPTION PHENOTYPE</scope>
    <scope>SUBUNIT</scope>
    <source>
        <strain>ATCC 13032 / DSM 20300 / JCM 1318 / BCRC 11384 / CCUG 27702 / LMG 3730 / NBRC 12168 / NCIMB 10025 / NRRL B-2784 / 534</strain>
    </source>
</reference>
<reference key="4">
    <citation type="journal article" date="2013" name="J. Biol. Chem.">
        <title>Crystal and solution studies reveal that the transcriptional regulator AcnR of Corynebacterium glutamicum is regulated by citrate-Mg2+ binding to a non-canonical pocket.</title>
        <authorList>
            <person name="Garcia-Nafria J."/>
            <person name="Baumgart M."/>
            <person name="Turkenburg J.P."/>
            <person name="Wilkinson A.J."/>
            <person name="Bott M."/>
            <person name="Wilson K.S."/>
        </authorList>
    </citation>
    <scope>X-RAY CRYSTALLOGRAPHY (1.65 ANGSTROMS) OF 2-188 IN COMPLEX WITH CITRATE AND MAGNESIUM</scope>
    <scope>FUNCTION</scope>
    <scope>MUTAGENESIS OF LYS-43; LYS-55; GLU-65; ASP-66; ARG-99; LYS-104; ARG-141 AND ASP-143</scope>
    <scope>SUBUNIT</scope>
</reference>
<evidence type="ECO:0000255" key="1">
    <source>
        <dbReference type="PROSITE-ProRule" id="PRU00335"/>
    </source>
</evidence>
<evidence type="ECO:0000269" key="2">
    <source>
    </source>
</evidence>
<evidence type="ECO:0000269" key="3">
    <source>
    </source>
</evidence>
<evidence type="ECO:0000303" key="4">
    <source>
    </source>
</evidence>
<evidence type="ECO:0007829" key="5">
    <source>
        <dbReference type="PDB" id="4ACI"/>
    </source>
</evidence>
<keyword id="KW-0002">3D-structure</keyword>
<keyword id="KW-0238">DNA-binding</keyword>
<keyword id="KW-0460">Magnesium</keyword>
<keyword id="KW-0479">Metal-binding</keyword>
<keyword id="KW-1185">Reference proteome</keyword>
<keyword id="KW-0678">Repressor</keyword>
<keyword id="KW-0804">Transcription</keyword>
<keyword id="KW-0805">Transcription regulation</keyword>
<proteinExistence type="evidence at protein level"/>
<feature type="chain" id="PRO_0000070571" description="HTH-type transcriptional repressor AcnR">
    <location>
        <begin position="1"/>
        <end position="188"/>
    </location>
</feature>
<feature type="domain" description="HTH tetR-type" evidence="1">
    <location>
        <begin position="10"/>
        <end position="70"/>
    </location>
</feature>
<feature type="DNA-binding region" description="H-T-H motif" evidence="1">
    <location>
        <begin position="33"/>
        <end position="52"/>
    </location>
</feature>
<feature type="binding site" evidence="3">
    <location>
        <begin position="79"/>
        <end position="80"/>
    </location>
    <ligand>
        <name>citrate</name>
        <dbReference type="ChEBI" id="CHEBI:16947"/>
    </ligand>
</feature>
<feature type="binding site" evidence="3">
    <location>
        <position position="130"/>
    </location>
    <ligand>
        <name>citrate</name>
        <dbReference type="ChEBI" id="CHEBI:16947"/>
    </ligand>
</feature>
<feature type="binding site" evidence="3">
    <location>
        <position position="134"/>
    </location>
    <ligand>
        <name>citrate</name>
        <dbReference type="ChEBI" id="CHEBI:16947"/>
    </ligand>
</feature>
<feature type="binding site" evidence="3">
    <location>
        <position position="181"/>
    </location>
    <ligand>
        <name>Mg(2+)</name>
        <dbReference type="ChEBI" id="CHEBI:18420"/>
    </ligand>
</feature>
<feature type="binding site" evidence="3">
    <location>
        <position position="185"/>
    </location>
    <ligand>
        <name>citrate</name>
        <dbReference type="ChEBI" id="CHEBI:16947"/>
    </ligand>
</feature>
<feature type="mutagenesis site" description="DNA binding affinity is almost completely abolished. Still forms a dimer." evidence="3">
    <original>K</original>
    <variation>A</variation>
    <location>
        <position position="43"/>
    </location>
</feature>
<feature type="mutagenesis site" description="DNA binding affinity is almost completely abolished. Still forms a dimer but the ratio of aggregated to dimeric protein is significantly higher." evidence="3">
    <original>K</original>
    <variation>A</variation>
    <location>
        <position position="55"/>
    </location>
</feature>
<feature type="mutagenesis site" description="No effect on DNA binding." evidence="3">
    <original>E</original>
    <variation>A</variation>
    <location>
        <position position="65"/>
    </location>
</feature>
<feature type="mutagenesis site" description="No effect on DNA binding." evidence="3">
    <original>D</original>
    <variation>A</variation>
    <location>
        <position position="66"/>
    </location>
</feature>
<feature type="mutagenesis site" description="Weaker binding to DNA." evidence="3">
    <original>R</original>
    <variation>A</variation>
    <location>
        <position position="99"/>
    </location>
</feature>
<feature type="mutagenesis site" description="DNA binding affinity is slightly reduced. Still forms a dimer but the ratio of aggregated to dimeric protein is significantly higher." evidence="3">
    <original>K</original>
    <variation>A</variation>
    <location>
        <position position="104"/>
    </location>
</feature>
<feature type="mutagenesis site" description="No effect on DNA binding." evidence="3">
    <original>D</original>
    <variation>A</variation>
    <location>
        <position position="109"/>
    </location>
</feature>
<feature type="mutagenesis site" description="No effect on DNA binding." evidence="3">
    <original>R</original>
    <variation>A</variation>
    <location>
        <position position="141"/>
    </location>
</feature>
<feature type="mutagenesis site" description="No effect on DNA binding." evidence="3">
    <original>D</original>
    <variation>A</variation>
    <location>
        <position position="143"/>
    </location>
</feature>
<feature type="helix" evidence="5">
    <location>
        <begin position="12"/>
        <end position="31"/>
    </location>
</feature>
<feature type="helix" evidence="5">
    <location>
        <begin position="34"/>
        <end position="41"/>
    </location>
</feature>
<feature type="helix" evidence="5">
    <location>
        <begin position="45"/>
        <end position="52"/>
    </location>
</feature>
<feature type="helix" evidence="5">
    <location>
        <begin position="55"/>
        <end position="88"/>
    </location>
</feature>
<feature type="helix" evidence="5">
    <location>
        <begin position="90"/>
        <end position="92"/>
    </location>
</feature>
<feature type="helix" evidence="5">
    <location>
        <begin position="93"/>
        <end position="101"/>
    </location>
</feature>
<feature type="helix" evidence="5">
    <location>
        <begin position="103"/>
        <end position="108"/>
    </location>
</feature>
<feature type="helix" evidence="5">
    <location>
        <begin position="110"/>
        <end position="119"/>
    </location>
</feature>
<feature type="helix" evidence="5">
    <location>
        <begin position="121"/>
        <end position="136"/>
    </location>
</feature>
<feature type="strand" evidence="5">
    <location>
        <begin position="142"/>
        <end position="144"/>
    </location>
</feature>
<feature type="helix" evidence="5">
    <location>
        <begin position="146"/>
        <end position="165"/>
    </location>
</feature>
<feature type="helix" evidence="5">
    <location>
        <begin position="173"/>
        <end position="184"/>
    </location>
</feature>